<keyword id="KW-0963">Cytoplasm</keyword>
<keyword id="KW-0396">Initiation factor</keyword>
<keyword id="KW-0648">Protein biosynthesis</keyword>
<keyword id="KW-1185">Reference proteome</keyword>
<evidence type="ECO:0000255" key="1">
    <source>
        <dbReference type="HAMAP-Rule" id="MF_03002"/>
    </source>
</evidence>
<evidence type="ECO:0000255" key="2">
    <source>
        <dbReference type="PROSITE-ProRule" id="PRU01185"/>
    </source>
</evidence>
<evidence type="ECO:0000256" key="3">
    <source>
        <dbReference type="SAM" id="MobiDB-lite"/>
    </source>
</evidence>
<comment type="function">
    <text evidence="1">Component of the eukaryotic translation initiation factor 3 (eIF-3) complex, which is involved in protein synthesis of a specialized repertoire of mRNAs and, together with other initiation factors, stimulates binding of mRNA and methionyl-tRNAi to the 40S ribosome. The eIF-3 complex specifically targets and initiates translation of a subset of mRNAs involved in cell proliferation.</text>
</comment>
<comment type="subunit">
    <text evidence="1">Component of the eukaryotic translation initiation factor 3 (eIF-3) complex.</text>
</comment>
<comment type="subcellular location">
    <subcellularLocation>
        <location evidence="1">Cytoplasm</location>
    </subcellularLocation>
</comment>
<comment type="similarity">
    <text evidence="1">Belongs to the eIF-3 subunit C family.</text>
</comment>
<reference key="1">
    <citation type="submission" date="2006-05" db="EMBL/GenBank/DDBJ databases">
        <title>Translation initiation factors in Bombyx mori.</title>
        <authorList>
            <person name="Wang L.-L."/>
            <person name="Chen K.-P."/>
            <person name="Yao Q."/>
            <person name="Hu Z.-G."/>
            <person name="Chen H.-Q."/>
        </authorList>
    </citation>
    <scope>NUCLEOTIDE SEQUENCE [MRNA]</scope>
</reference>
<proteinExistence type="evidence at transcript level"/>
<sequence>MSRFFATGTDSESESSSEDEPVVRAPAPVYTFSDDEEETKRVVRSMKEKRYEELEGIIHSIRNHRKIKDFSSALASFEELQKAYTRAAPVVQKEENGVAPRFFIRALVELDDWVVGAWNEREARKALSKGNSKALTSLRQKLRKYTKDFEAEISXFREDPDLPDDNERKDSSSSDESEDEEKPIKEKPKPEPLLRPPPEDDESSDSMDWASSSSDSSFSSDDEERGTSNIREQFIKKVTKKEDDEEKIKLKLKKREERRERSGKINKRDVADDGGEWETVRKGAATSDKPKMFAKDSDIDAALVVKKLGEISAARGRKRTDRRAQLELLHELRTVALQHNLGDALQLKLRSAIVAALFDYNPKVSDAMKPEYWSKLVENIDHMVTLLLAHEDMVLSETILEENEQLVTPPYQVRGCLLTYLERLDDEFTKLLKECDPHSNEYVERLKDEVRVSALIDRVCQVVERDGTPQEICRAYLRKIDHLYYKFDPRAVRKDLPPTEETTIKKMERYCKYIYAHDETDRLRTRAILSHIYHHALHDNWFQARDLLLMSHLQETVQHSDPSTQILYNRTMANLGLCAFRRGNVKEAHGCLAELMMTGKPKELLAQGLLPQRQHERSKEQEKIEKQRQMPFHMHINLELLECVYLVSAMLIEIPYMAAHEFDARRRMISKTFYQNLRASERQALVGPPESMREHAVAAARAMRRGDWRACLNYIVNEKMNAKVWDLMVGADNVRAMLGRLIREESLRTYLFTYAHVYASLSLRSLADMFELPRQRVHSLVSKMIINEELLASLDDPSECAILHRSEPTRMQALALQLADKVGNLVDSNERIFEKQGSFFQRGGAQRGEGRQRERPREGWNRRTRNRRRDDERADD</sequence>
<gene>
    <name evidence="1" type="primary">eIF3-S8</name>
</gene>
<dbReference type="EMBL" id="DQ645460">
    <property type="protein sequence ID" value="ABG54288.1"/>
    <property type="molecule type" value="mRNA"/>
</dbReference>
<dbReference type="RefSeq" id="NP_001037658.1">
    <property type="nucleotide sequence ID" value="NM_001044193.1"/>
</dbReference>
<dbReference type="FunCoup" id="Q0ZB76">
    <property type="interactions" value="1631"/>
</dbReference>
<dbReference type="STRING" id="7091.Q0ZB76"/>
<dbReference type="PaxDb" id="7091-BGIBMGA012851-TA"/>
<dbReference type="EnsemblMetazoa" id="NM_001044193.1">
    <property type="protein sequence ID" value="NP_001037658.1"/>
    <property type="gene ID" value="GeneID_733086"/>
</dbReference>
<dbReference type="GeneID" id="733086"/>
<dbReference type="KEGG" id="bmor:733086"/>
<dbReference type="CTD" id="8663"/>
<dbReference type="eggNOG" id="KOG1076">
    <property type="taxonomic scope" value="Eukaryota"/>
</dbReference>
<dbReference type="HOGENOM" id="CLU_004304_0_0_1"/>
<dbReference type="InParanoid" id="Q0ZB76"/>
<dbReference type="OrthoDB" id="434047at7088"/>
<dbReference type="Proteomes" id="UP000005204">
    <property type="component" value="Unassembled WGS sequence"/>
</dbReference>
<dbReference type="GO" id="GO:0016282">
    <property type="term" value="C:eukaryotic 43S preinitiation complex"/>
    <property type="evidence" value="ECO:0007669"/>
    <property type="project" value="UniProtKB-UniRule"/>
</dbReference>
<dbReference type="GO" id="GO:0033290">
    <property type="term" value="C:eukaryotic 48S preinitiation complex"/>
    <property type="evidence" value="ECO:0007669"/>
    <property type="project" value="UniProtKB-UniRule"/>
</dbReference>
<dbReference type="GO" id="GO:0005852">
    <property type="term" value="C:eukaryotic translation initiation factor 3 complex"/>
    <property type="evidence" value="ECO:0007669"/>
    <property type="project" value="UniProtKB-UniRule"/>
</dbReference>
<dbReference type="GO" id="GO:0003723">
    <property type="term" value="F:RNA binding"/>
    <property type="evidence" value="ECO:0007669"/>
    <property type="project" value="InterPro"/>
</dbReference>
<dbReference type="GO" id="GO:0003743">
    <property type="term" value="F:translation initiation factor activity"/>
    <property type="evidence" value="ECO:0007669"/>
    <property type="project" value="UniProtKB-UniRule"/>
</dbReference>
<dbReference type="GO" id="GO:0031369">
    <property type="term" value="F:translation initiation factor binding"/>
    <property type="evidence" value="ECO:0007669"/>
    <property type="project" value="InterPro"/>
</dbReference>
<dbReference type="GO" id="GO:0001732">
    <property type="term" value="P:formation of cytoplasmic translation initiation complex"/>
    <property type="evidence" value="ECO:0007669"/>
    <property type="project" value="UniProtKB-UniRule"/>
</dbReference>
<dbReference type="Gene3D" id="1.25.40.570">
    <property type="match status" value="1"/>
</dbReference>
<dbReference type="HAMAP" id="MF_03002">
    <property type="entry name" value="eIF3c"/>
    <property type="match status" value="1"/>
</dbReference>
<dbReference type="InterPro" id="IPR027516">
    <property type="entry name" value="EIF3C"/>
</dbReference>
<dbReference type="InterPro" id="IPR008905">
    <property type="entry name" value="EIF3C_N_dom"/>
</dbReference>
<dbReference type="InterPro" id="IPR000717">
    <property type="entry name" value="PCI_dom"/>
</dbReference>
<dbReference type="InterPro" id="IPR036390">
    <property type="entry name" value="WH_DNA-bd_sf"/>
</dbReference>
<dbReference type="PANTHER" id="PTHR13937">
    <property type="entry name" value="EUKARYOTIC TRANSLATION INITATION FACTOR 3, SUBUNIT 8 EIF3S8 -RELATED"/>
    <property type="match status" value="1"/>
</dbReference>
<dbReference type="PANTHER" id="PTHR13937:SF0">
    <property type="entry name" value="EUKARYOTIC TRANSLATION INITIATION FACTOR 3 SUBUNIT C-RELATED"/>
    <property type="match status" value="1"/>
</dbReference>
<dbReference type="Pfam" id="PF05470">
    <property type="entry name" value="eIF-3c_N"/>
    <property type="match status" value="1"/>
</dbReference>
<dbReference type="Pfam" id="PF01399">
    <property type="entry name" value="PCI"/>
    <property type="match status" value="1"/>
</dbReference>
<dbReference type="SMART" id="SM00088">
    <property type="entry name" value="PINT"/>
    <property type="match status" value="1"/>
</dbReference>
<dbReference type="SUPFAM" id="SSF46785">
    <property type="entry name" value="Winged helix' DNA-binding domain"/>
    <property type="match status" value="1"/>
</dbReference>
<dbReference type="PROSITE" id="PS50250">
    <property type="entry name" value="PCI"/>
    <property type="match status" value="1"/>
</dbReference>
<protein>
    <recommendedName>
        <fullName evidence="1">Eukaryotic translation initiation factor 3 subunit C</fullName>
        <shortName evidence="1">eIF3c</shortName>
    </recommendedName>
    <alternativeName>
        <fullName evidence="1">Eukaryotic translation initiation factor 3 subunit 8</fullName>
    </alternativeName>
</protein>
<feature type="chain" id="PRO_0000365383" description="Eukaryotic translation initiation factor 3 subunit C">
    <location>
        <begin position="1"/>
        <end position="876"/>
    </location>
</feature>
<feature type="domain" description="PCI" evidence="2">
    <location>
        <begin position="632"/>
        <end position="808"/>
    </location>
</feature>
<feature type="region of interest" description="Disordered" evidence="3">
    <location>
        <begin position="1"/>
        <end position="25"/>
    </location>
</feature>
<feature type="region of interest" description="Disordered" evidence="3">
    <location>
        <begin position="154"/>
        <end position="233"/>
    </location>
</feature>
<feature type="region of interest" description="Disordered" evidence="3">
    <location>
        <begin position="839"/>
        <end position="876"/>
    </location>
</feature>
<feature type="compositionally biased region" description="Acidic residues" evidence="3">
    <location>
        <begin position="11"/>
        <end position="20"/>
    </location>
</feature>
<feature type="compositionally biased region" description="Basic and acidic residues" evidence="3">
    <location>
        <begin position="154"/>
        <end position="172"/>
    </location>
</feature>
<feature type="compositionally biased region" description="Basic and acidic residues" evidence="3">
    <location>
        <begin position="182"/>
        <end position="192"/>
    </location>
</feature>
<feature type="compositionally biased region" description="Low complexity" evidence="3">
    <location>
        <begin position="206"/>
        <end position="219"/>
    </location>
</feature>
<feature type="compositionally biased region" description="Basic and acidic residues" evidence="3">
    <location>
        <begin position="848"/>
        <end position="861"/>
    </location>
</feature>
<accession>Q0ZB76</accession>
<organism>
    <name type="scientific">Bombyx mori</name>
    <name type="common">Silk moth</name>
    <dbReference type="NCBI Taxonomy" id="7091"/>
    <lineage>
        <taxon>Eukaryota</taxon>
        <taxon>Metazoa</taxon>
        <taxon>Ecdysozoa</taxon>
        <taxon>Arthropoda</taxon>
        <taxon>Hexapoda</taxon>
        <taxon>Insecta</taxon>
        <taxon>Pterygota</taxon>
        <taxon>Neoptera</taxon>
        <taxon>Endopterygota</taxon>
        <taxon>Lepidoptera</taxon>
        <taxon>Glossata</taxon>
        <taxon>Ditrysia</taxon>
        <taxon>Bombycoidea</taxon>
        <taxon>Bombycidae</taxon>
        <taxon>Bombycinae</taxon>
        <taxon>Bombyx</taxon>
    </lineage>
</organism>
<name>EIF3C_BOMMO</name>